<proteinExistence type="evidence at transcript level"/>
<comment type="function">
    <text evidence="1">One gap junction consists of a cluster of closely packed pairs of transmembrane channels, the connexons, through which materials of low MW diffuse from one cell to a neighboring cell.</text>
</comment>
<comment type="subunit">
    <text evidence="1">A connexon is composed of a hexamer of connexins. Interacts with CNST (By similarity).</text>
</comment>
<comment type="subcellular location">
    <subcellularLocation>
        <location evidence="1">Cell membrane</location>
        <topology evidence="1">Multi-pass membrane protein</topology>
    </subcellularLocation>
    <subcellularLocation>
        <location evidence="1">Cell junction</location>
        <location evidence="1">Gap junction</location>
    </subcellularLocation>
</comment>
<comment type="similarity">
    <text evidence="4">Belongs to the connexin family. Gamma-type subfamily.</text>
</comment>
<protein>
    <recommendedName>
        <fullName>Gap junction gamma-1 protein</fullName>
    </recommendedName>
    <alternativeName>
        <fullName>Connexin-45</fullName>
        <shortName>Cx45</shortName>
    </alternativeName>
    <alternativeName>
        <fullName>Gap junction alpha-7 protein</fullName>
    </alternativeName>
</protein>
<organism>
    <name type="scientific">Cricetulus griseus</name>
    <name type="common">Chinese hamster</name>
    <name type="synonym">Cricetulus barabensis griseus</name>
    <dbReference type="NCBI Taxonomy" id="10029"/>
    <lineage>
        <taxon>Eukaryota</taxon>
        <taxon>Metazoa</taxon>
        <taxon>Chordata</taxon>
        <taxon>Craniata</taxon>
        <taxon>Vertebrata</taxon>
        <taxon>Euteleostomi</taxon>
        <taxon>Mammalia</taxon>
        <taxon>Eutheria</taxon>
        <taxon>Euarchontoglires</taxon>
        <taxon>Glires</taxon>
        <taxon>Rodentia</taxon>
        <taxon>Myomorpha</taxon>
        <taxon>Muroidea</taxon>
        <taxon>Cricetidae</taxon>
        <taxon>Cricetinae</taxon>
        <taxon>Cricetulus</taxon>
    </lineage>
</organism>
<accession>Q6R4A8</accession>
<name>CXG1_CRIGR</name>
<sequence length="396" mass="45666">MSWSFLTRLLEEIHNHSTFVGKIWLTVLIVFRIVLTAVGGESIYYDEQSKFVCNTEQPGCENVCYDAFAPLSHVRFWVFQIILVATPSVMYLGYAIHKIAKMEHGEADKKAARSKPYAMRWKQHRALEETEEDHEEDPMMYPEMELESEKENKEQSQPKPKHDGRRRIREDGLMKIYVLQLLARTVFEVGFLIGQYFLYGFQVHPFYVCSRLPCPHKIDCFISRPTEKTIFLLIMYGVTGLCLLLNIWEMLHLGFGTIRDSLNSKRRELDDPGAYNYPFTWNTPSAPPGYNIAVKPDQIQYTELSNAKIAYKQNKANIAQEQQYGSHEEHLPADLETLQREIRMAQERLDLAIQAYHHQNNPHGPREKKAKVGSKSGSNKSSISSKSGDGKTSVWI</sequence>
<gene>
    <name type="primary">GJC1</name>
    <name type="synonym">GJA7</name>
</gene>
<reference key="1">
    <citation type="journal article" date="2004" name="Cell Commun. Adhes.">
        <title>The detection of hamster connexins: a comparison of expression profiles with wild-type mouse and the cancer-prone min mouse.</title>
        <authorList>
            <person name="Cruciani V."/>
            <person name="Heintz K.-M."/>
            <person name="Husoey T."/>
            <person name="Hovig E."/>
            <person name="Warren D.J."/>
            <person name="Mikalsen S.-O."/>
        </authorList>
    </citation>
    <scope>NUCLEOTIDE SEQUENCE [MRNA]</scope>
    <source>
        <tissue>Lung</tissue>
    </source>
</reference>
<dbReference type="EMBL" id="AY514680">
    <property type="protein sequence ID" value="AAR98617.1"/>
    <property type="molecule type" value="mRNA"/>
</dbReference>
<dbReference type="RefSeq" id="NP_001233715.1">
    <property type="nucleotide sequence ID" value="NM_001246786.1"/>
</dbReference>
<dbReference type="RefSeq" id="XP_007643222.1">
    <property type="nucleotide sequence ID" value="XM_007645032.1"/>
</dbReference>
<dbReference type="RefSeq" id="XP_007643223.1">
    <property type="nucleotide sequence ID" value="XM_007645033.1"/>
</dbReference>
<dbReference type="RefSeq" id="XP_007643224.1">
    <property type="nucleotide sequence ID" value="XM_007645034.1"/>
</dbReference>
<dbReference type="BMRB" id="Q6R4A8"/>
<dbReference type="SMR" id="Q6R4A8"/>
<dbReference type="PaxDb" id="10029-NP_001233715.1"/>
<dbReference type="Ensembl" id="ENSCGRT00001010196.1">
    <property type="protein sequence ID" value="ENSCGRP00001006483.1"/>
    <property type="gene ID" value="ENSCGRG00001008773.1"/>
</dbReference>
<dbReference type="GeneID" id="100689357"/>
<dbReference type="KEGG" id="cge:100689357"/>
<dbReference type="CTD" id="10052"/>
<dbReference type="eggNOG" id="ENOG502QV2G">
    <property type="taxonomic scope" value="Eukaryota"/>
</dbReference>
<dbReference type="GeneTree" id="ENSGT01130000278276"/>
<dbReference type="OMA" id="VRWKQHR"/>
<dbReference type="OrthoDB" id="8875898at2759"/>
<dbReference type="Proteomes" id="UP000694386">
    <property type="component" value="Unplaced"/>
</dbReference>
<dbReference type="Proteomes" id="UP001108280">
    <property type="component" value="Chromosome 7"/>
</dbReference>
<dbReference type="GO" id="GO:0005922">
    <property type="term" value="C:connexin complex"/>
    <property type="evidence" value="ECO:0007669"/>
    <property type="project" value="Ensembl"/>
</dbReference>
<dbReference type="GO" id="GO:0005783">
    <property type="term" value="C:endoplasmic reticulum"/>
    <property type="evidence" value="ECO:0007669"/>
    <property type="project" value="Ensembl"/>
</dbReference>
<dbReference type="GO" id="GO:0005654">
    <property type="term" value="C:nucleoplasm"/>
    <property type="evidence" value="ECO:0007669"/>
    <property type="project" value="Ensembl"/>
</dbReference>
<dbReference type="GO" id="GO:0045202">
    <property type="term" value="C:synapse"/>
    <property type="evidence" value="ECO:0007669"/>
    <property type="project" value="GOC"/>
</dbReference>
<dbReference type="GO" id="GO:0086077">
    <property type="term" value="F:gap junction channel activity involved in AV node cell-bundle of His cell electrical coupling"/>
    <property type="evidence" value="ECO:0007669"/>
    <property type="project" value="Ensembl"/>
</dbReference>
<dbReference type="GO" id="GO:0005216">
    <property type="term" value="F:monoatomic ion channel activity"/>
    <property type="evidence" value="ECO:0007669"/>
    <property type="project" value="Ensembl"/>
</dbReference>
<dbReference type="GO" id="GO:0048738">
    <property type="term" value="P:cardiac muscle tissue development"/>
    <property type="evidence" value="ECO:0007669"/>
    <property type="project" value="Ensembl"/>
</dbReference>
<dbReference type="GO" id="GO:0048468">
    <property type="term" value="P:cell development"/>
    <property type="evidence" value="ECO:0007669"/>
    <property type="project" value="Ensembl"/>
</dbReference>
<dbReference type="GO" id="GO:0007268">
    <property type="term" value="P:chemical synaptic transmission"/>
    <property type="evidence" value="ECO:0007669"/>
    <property type="project" value="Ensembl"/>
</dbReference>
<dbReference type="GO" id="GO:0016264">
    <property type="term" value="P:gap junction assembly"/>
    <property type="evidence" value="ECO:0007669"/>
    <property type="project" value="Ensembl"/>
</dbReference>
<dbReference type="GO" id="GO:0001570">
    <property type="term" value="P:vasculogenesis"/>
    <property type="evidence" value="ECO:0007669"/>
    <property type="project" value="Ensembl"/>
</dbReference>
<dbReference type="GO" id="GO:0007601">
    <property type="term" value="P:visual perception"/>
    <property type="evidence" value="ECO:0007669"/>
    <property type="project" value="Ensembl"/>
</dbReference>
<dbReference type="FunFam" id="1.20.1440.80:FF:000003">
    <property type="entry name" value="Gap junction protein"/>
    <property type="match status" value="1"/>
</dbReference>
<dbReference type="Gene3D" id="1.20.1440.80">
    <property type="entry name" value="Gap junction channel protein cysteine-rich domain"/>
    <property type="match status" value="1"/>
</dbReference>
<dbReference type="InterPro" id="IPR000500">
    <property type="entry name" value="Connexin"/>
</dbReference>
<dbReference type="InterPro" id="IPR002265">
    <property type="entry name" value="Connexin45"/>
</dbReference>
<dbReference type="InterPro" id="IPR019570">
    <property type="entry name" value="Connexin_CCC"/>
</dbReference>
<dbReference type="InterPro" id="IPR017990">
    <property type="entry name" value="Connexin_CS"/>
</dbReference>
<dbReference type="InterPro" id="IPR013092">
    <property type="entry name" value="Connexin_N"/>
</dbReference>
<dbReference type="InterPro" id="IPR038359">
    <property type="entry name" value="Connexin_N_sf"/>
</dbReference>
<dbReference type="PANTHER" id="PTHR11984">
    <property type="entry name" value="CONNEXIN"/>
    <property type="match status" value="1"/>
</dbReference>
<dbReference type="PANTHER" id="PTHR11984:SF6">
    <property type="entry name" value="GAP JUNCTION GAMMA-1 PROTEIN"/>
    <property type="match status" value="1"/>
</dbReference>
<dbReference type="Pfam" id="PF00029">
    <property type="entry name" value="Connexin"/>
    <property type="match status" value="1"/>
</dbReference>
<dbReference type="PRINTS" id="PR00206">
    <property type="entry name" value="CONNEXIN"/>
</dbReference>
<dbReference type="PRINTS" id="PR01136">
    <property type="entry name" value="CONNEXINA6"/>
</dbReference>
<dbReference type="SMART" id="SM00037">
    <property type="entry name" value="CNX"/>
    <property type="match status" value="1"/>
</dbReference>
<dbReference type="SMART" id="SM01089">
    <property type="entry name" value="Connexin_CCC"/>
    <property type="match status" value="1"/>
</dbReference>
<dbReference type="PROSITE" id="PS00407">
    <property type="entry name" value="CONNEXINS_1"/>
    <property type="match status" value="1"/>
</dbReference>
<dbReference type="PROSITE" id="PS00408">
    <property type="entry name" value="CONNEXINS_2"/>
    <property type="match status" value="1"/>
</dbReference>
<evidence type="ECO:0000250" key="1"/>
<evidence type="ECO:0000255" key="2"/>
<evidence type="ECO:0000256" key="3">
    <source>
        <dbReference type="SAM" id="MobiDB-lite"/>
    </source>
</evidence>
<evidence type="ECO:0000305" key="4"/>
<feature type="chain" id="PRO_0000369541" description="Gap junction gamma-1 protein">
    <location>
        <begin position="1"/>
        <end position="396"/>
    </location>
</feature>
<feature type="topological domain" description="Cytoplasmic" evidence="2">
    <location>
        <begin position="1"/>
        <end position="18"/>
    </location>
</feature>
<feature type="transmembrane region" description="Helical" evidence="2">
    <location>
        <begin position="19"/>
        <end position="39"/>
    </location>
</feature>
<feature type="topological domain" description="Extracellular" evidence="2">
    <location>
        <begin position="40"/>
        <end position="75"/>
    </location>
</feature>
<feature type="transmembrane region" description="Helical" evidence="2">
    <location>
        <begin position="76"/>
        <end position="96"/>
    </location>
</feature>
<feature type="topological domain" description="Cytoplasmic" evidence="2">
    <location>
        <begin position="97"/>
        <end position="175"/>
    </location>
</feature>
<feature type="transmembrane region" description="Helical" evidence="2">
    <location>
        <begin position="176"/>
        <end position="198"/>
    </location>
</feature>
<feature type="topological domain" description="Extracellular" evidence="2">
    <location>
        <begin position="199"/>
        <end position="229"/>
    </location>
</feature>
<feature type="transmembrane region" description="Helical" evidence="2">
    <location>
        <begin position="230"/>
        <end position="250"/>
    </location>
</feature>
<feature type="topological domain" description="Cytoplasmic" evidence="2">
    <location>
        <begin position="251"/>
        <end position="396"/>
    </location>
</feature>
<feature type="region of interest" description="Disordered" evidence="3">
    <location>
        <begin position="145"/>
        <end position="165"/>
    </location>
</feature>
<feature type="region of interest" description="Disordered" evidence="3">
    <location>
        <begin position="357"/>
        <end position="396"/>
    </location>
</feature>
<feature type="coiled-coil region" evidence="2">
    <location>
        <begin position="303"/>
        <end position="358"/>
    </location>
</feature>
<feature type="compositionally biased region" description="Basic and acidic residues" evidence="3">
    <location>
        <begin position="147"/>
        <end position="156"/>
    </location>
</feature>
<feature type="compositionally biased region" description="Low complexity" evidence="3">
    <location>
        <begin position="373"/>
        <end position="396"/>
    </location>
</feature>
<keyword id="KW-0965">Cell junction</keyword>
<keyword id="KW-1003">Cell membrane</keyword>
<keyword id="KW-0175">Coiled coil</keyword>
<keyword id="KW-0303">Gap junction</keyword>
<keyword id="KW-0472">Membrane</keyword>
<keyword id="KW-0812">Transmembrane</keyword>
<keyword id="KW-1133">Transmembrane helix</keyword>